<comment type="function">
    <text evidence="1">Involved in protein export. Acts as a chaperone by maintaining the newly synthesized protein in an open conformation. Functions as a peptidyl-prolyl cis-trans isomerase.</text>
</comment>
<comment type="catalytic activity">
    <reaction evidence="1">
        <text>[protein]-peptidylproline (omega=180) = [protein]-peptidylproline (omega=0)</text>
        <dbReference type="Rhea" id="RHEA:16237"/>
        <dbReference type="Rhea" id="RHEA-COMP:10747"/>
        <dbReference type="Rhea" id="RHEA-COMP:10748"/>
        <dbReference type="ChEBI" id="CHEBI:83833"/>
        <dbReference type="ChEBI" id="CHEBI:83834"/>
        <dbReference type="EC" id="5.2.1.8"/>
    </reaction>
</comment>
<comment type="subcellular location">
    <subcellularLocation>
        <location>Cytoplasm</location>
    </subcellularLocation>
    <text evidence="1">About half TF is bound to the ribosome near the polypeptide exit tunnel while the other half is free in the cytoplasm.</text>
</comment>
<comment type="domain">
    <text evidence="1">Consists of 3 domains; the N-terminus binds the ribosome, the middle domain has PPIase activity, while the C-terminus has intrinsic chaperone activity on its own.</text>
</comment>
<comment type="similarity">
    <text evidence="1">Belongs to the FKBP-type PPIase family. Tig subfamily.</text>
</comment>
<accession>A4JF06</accession>
<gene>
    <name evidence="1" type="primary">tig</name>
    <name type="ordered locus">Bcep1808_1856</name>
</gene>
<evidence type="ECO:0000255" key="1">
    <source>
        <dbReference type="HAMAP-Rule" id="MF_00303"/>
    </source>
</evidence>
<name>TIG_BURVG</name>
<proteinExistence type="inferred from homology"/>
<dbReference type="EC" id="5.2.1.8" evidence="1"/>
<dbReference type="EMBL" id="CP000614">
    <property type="protein sequence ID" value="ABO54859.1"/>
    <property type="molecule type" value="Genomic_DNA"/>
</dbReference>
<dbReference type="SMR" id="A4JF06"/>
<dbReference type="KEGG" id="bvi:Bcep1808_1856"/>
<dbReference type="eggNOG" id="COG0544">
    <property type="taxonomic scope" value="Bacteria"/>
</dbReference>
<dbReference type="HOGENOM" id="CLU_033058_2_0_4"/>
<dbReference type="Proteomes" id="UP000002287">
    <property type="component" value="Chromosome 1"/>
</dbReference>
<dbReference type="GO" id="GO:0005737">
    <property type="term" value="C:cytoplasm"/>
    <property type="evidence" value="ECO:0007669"/>
    <property type="project" value="UniProtKB-SubCell"/>
</dbReference>
<dbReference type="GO" id="GO:0003755">
    <property type="term" value="F:peptidyl-prolyl cis-trans isomerase activity"/>
    <property type="evidence" value="ECO:0007669"/>
    <property type="project" value="UniProtKB-UniRule"/>
</dbReference>
<dbReference type="GO" id="GO:0044183">
    <property type="term" value="F:protein folding chaperone"/>
    <property type="evidence" value="ECO:0007669"/>
    <property type="project" value="TreeGrafter"/>
</dbReference>
<dbReference type="GO" id="GO:0043022">
    <property type="term" value="F:ribosome binding"/>
    <property type="evidence" value="ECO:0007669"/>
    <property type="project" value="TreeGrafter"/>
</dbReference>
<dbReference type="GO" id="GO:0051083">
    <property type="term" value="P:'de novo' cotranslational protein folding"/>
    <property type="evidence" value="ECO:0007669"/>
    <property type="project" value="TreeGrafter"/>
</dbReference>
<dbReference type="GO" id="GO:0051301">
    <property type="term" value="P:cell division"/>
    <property type="evidence" value="ECO:0007669"/>
    <property type="project" value="UniProtKB-KW"/>
</dbReference>
<dbReference type="GO" id="GO:0061077">
    <property type="term" value="P:chaperone-mediated protein folding"/>
    <property type="evidence" value="ECO:0007669"/>
    <property type="project" value="TreeGrafter"/>
</dbReference>
<dbReference type="GO" id="GO:0015031">
    <property type="term" value="P:protein transport"/>
    <property type="evidence" value="ECO:0007669"/>
    <property type="project" value="UniProtKB-UniRule"/>
</dbReference>
<dbReference type="GO" id="GO:0043335">
    <property type="term" value="P:protein unfolding"/>
    <property type="evidence" value="ECO:0007669"/>
    <property type="project" value="TreeGrafter"/>
</dbReference>
<dbReference type="FunFam" id="3.10.50.40:FF:000001">
    <property type="entry name" value="Trigger factor"/>
    <property type="match status" value="1"/>
</dbReference>
<dbReference type="Gene3D" id="3.10.50.40">
    <property type="match status" value="1"/>
</dbReference>
<dbReference type="Gene3D" id="3.30.70.1050">
    <property type="entry name" value="Trigger factor ribosome-binding domain"/>
    <property type="match status" value="1"/>
</dbReference>
<dbReference type="Gene3D" id="1.10.3120.10">
    <property type="entry name" value="Trigger factor, C-terminal domain"/>
    <property type="match status" value="1"/>
</dbReference>
<dbReference type="HAMAP" id="MF_00303">
    <property type="entry name" value="Trigger_factor_Tig"/>
    <property type="match status" value="1"/>
</dbReference>
<dbReference type="InterPro" id="IPR046357">
    <property type="entry name" value="PPIase_dom_sf"/>
</dbReference>
<dbReference type="InterPro" id="IPR001179">
    <property type="entry name" value="PPIase_FKBP_dom"/>
</dbReference>
<dbReference type="InterPro" id="IPR005215">
    <property type="entry name" value="Trig_fac"/>
</dbReference>
<dbReference type="InterPro" id="IPR008880">
    <property type="entry name" value="Trigger_fac_C"/>
</dbReference>
<dbReference type="InterPro" id="IPR037041">
    <property type="entry name" value="Trigger_fac_C_sf"/>
</dbReference>
<dbReference type="InterPro" id="IPR008881">
    <property type="entry name" value="Trigger_fac_ribosome-bd_bac"/>
</dbReference>
<dbReference type="InterPro" id="IPR036611">
    <property type="entry name" value="Trigger_fac_ribosome-bd_sf"/>
</dbReference>
<dbReference type="InterPro" id="IPR027304">
    <property type="entry name" value="Trigger_fact/SurA_dom_sf"/>
</dbReference>
<dbReference type="NCBIfam" id="TIGR00115">
    <property type="entry name" value="tig"/>
    <property type="match status" value="1"/>
</dbReference>
<dbReference type="PANTHER" id="PTHR30560">
    <property type="entry name" value="TRIGGER FACTOR CHAPERONE AND PEPTIDYL-PROLYL CIS/TRANS ISOMERASE"/>
    <property type="match status" value="1"/>
</dbReference>
<dbReference type="PANTHER" id="PTHR30560:SF3">
    <property type="entry name" value="TRIGGER FACTOR-LIKE PROTEIN TIG, CHLOROPLASTIC"/>
    <property type="match status" value="1"/>
</dbReference>
<dbReference type="Pfam" id="PF00254">
    <property type="entry name" value="FKBP_C"/>
    <property type="match status" value="1"/>
</dbReference>
<dbReference type="Pfam" id="PF05698">
    <property type="entry name" value="Trigger_C"/>
    <property type="match status" value="1"/>
</dbReference>
<dbReference type="Pfam" id="PF05697">
    <property type="entry name" value="Trigger_N"/>
    <property type="match status" value="1"/>
</dbReference>
<dbReference type="PIRSF" id="PIRSF003095">
    <property type="entry name" value="Trigger_factor"/>
    <property type="match status" value="1"/>
</dbReference>
<dbReference type="SUPFAM" id="SSF54534">
    <property type="entry name" value="FKBP-like"/>
    <property type="match status" value="1"/>
</dbReference>
<dbReference type="SUPFAM" id="SSF109998">
    <property type="entry name" value="Triger factor/SurA peptide-binding domain-like"/>
    <property type="match status" value="1"/>
</dbReference>
<dbReference type="SUPFAM" id="SSF102735">
    <property type="entry name" value="Trigger factor ribosome-binding domain"/>
    <property type="match status" value="1"/>
</dbReference>
<dbReference type="PROSITE" id="PS50059">
    <property type="entry name" value="FKBP_PPIASE"/>
    <property type="match status" value="1"/>
</dbReference>
<feature type="chain" id="PRO_1000022658" description="Trigger factor">
    <location>
        <begin position="1"/>
        <end position="448"/>
    </location>
</feature>
<feature type="domain" description="PPIase FKBP-type" evidence="1">
    <location>
        <begin position="172"/>
        <end position="257"/>
    </location>
</feature>
<reference key="1">
    <citation type="submission" date="2007-03" db="EMBL/GenBank/DDBJ databases">
        <title>Complete sequence of chromosome 1 of Burkholderia vietnamiensis G4.</title>
        <authorList>
            <consortium name="US DOE Joint Genome Institute"/>
            <person name="Copeland A."/>
            <person name="Lucas S."/>
            <person name="Lapidus A."/>
            <person name="Barry K."/>
            <person name="Detter J.C."/>
            <person name="Glavina del Rio T."/>
            <person name="Hammon N."/>
            <person name="Israni S."/>
            <person name="Dalin E."/>
            <person name="Tice H."/>
            <person name="Pitluck S."/>
            <person name="Chain P."/>
            <person name="Malfatti S."/>
            <person name="Shin M."/>
            <person name="Vergez L."/>
            <person name="Schmutz J."/>
            <person name="Larimer F."/>
            <person name="Land M."/>
            <person name="Hauser L."/>
            <person name="Kyrpides N."/>
            <person name="Tiedje J."/>
            <person name="Richardson P."/>
        </authorList>
    </citation>
    <scope>NUCLEOTIDE SEQUENCE [LARGE SCALE GENOMIC DNA]</scope>
    <source>
        <strain>G4 / LMG 22486</strain>
    </source>
</reference>
<protein>
    <recommendedName>
        <fullName evidence="1">Trigger factor</fullName>
        <shortName evidence="1">TF</shortName>
        <ecNumber evidence="1">5.2.1.8</ecNumber>
    </recommendedName>
    <alternativeName>
        <fullName evidence="1">PPIase</fullName>
    </alternativeName>
</protein>
<keyword id="KW-0131">Cell cycle</keyword>
<keyword id="KW-0132">Cell division</keyword>
<keyword id="KW-0143">Chaperone</keyword>
<keyword id="KW-0963">Cytoplasm</keyword>
<keyword id="KW-0413">Isomerase</keyword>
<keyword id="KW-0697">Rotamase</keyword>
<organism>
    <name type="scientific">Burkholderia vietnamiensis (strain G4 / LMG 22486)</name>
    <name type="common">Burkholderia cepacia (strain R1808)</name>
    <dbReference type="NCBI Taxonomy" id="269482"/>
    <lineage>
        <taxon>Bacteria</taxon>
        <taxon>Pseudomonadati</taxon>
        <taxon>Pseudomonadota</taxon>
        <taxon>Betaproteobacteria</taxon>
        <taxon>Burkholderiales</taxon>
        <taxon>Burkholderiaceae</taxon>
        <taxon>Burkholderia</taxon>
        <taxon>Burkholderia cepacia complex</taxon>
    </lineage>
</organism>
<sequence length="448" mass="49829">MANVVENLGKLERRVTISLPKDTVQKEIDARIQKLAKNVRMPGFRPGKVPLKMVAQQYAGQVEAEVLSDKIGQEFFTISRAENLRVAGQPSFEPKQEQAEDAYAFDATFEVYPEVKIGDLATAEVERSTTSIGDAEIDRTLDILRKQRVHYHARGEAGEHGDGGADTAAKNGDRVTVDFVGKIDDVAFQGGTAEDFPFVLGEGRMLPEFETAALGLKVGEARTFDLKFPDDYHGKDVAGKTAQFTVTMKKIEWPHMPEIDAEFAKSLGIEDGDLTKMRAEIKENLEREAKRRTQSIVKNQVMDALLKISELDVPKALIEQDQQRLVEMARQDLAQRGVPNAKDAPIPAEMFAEQAERRVKLGLVLAELVKANGLEAKPEQIRAEVDEFAKSYEDPKEVVRWYYSNQQRLAEMEAFVVESNVVEFVLGKAKVTDKEVSFEALASASAQA</sequence>